<feature type="chain" id="PRO_0000216318" description="Uncharacterized protein PM1189">
    <location>
        <begin position="1"/>
        <end position="156"/>
    </location>
</feature>
<feature type="transmembrane region" description="Helical" evidence="1">
    <location>
        <begin position="7"/>
        <end position="29"/>
    </location>
</feature>
<feature type="transmembrane region" description="Helical" evidence="1">
    <location>
        <begin position="42"/>
        <end position="64"/>
    </location>
</feature>
<feature type="transmembrane region" description="Helical" evidence="1">
    <location>
        <begin position="69"/>
        <end position="88"/>
    </location>
</feature>
<feature type="transmembrane region" description="Helical" evidence="1">
    <location>
        <begin position="98"/>
        <end position="120"/>
    </location>
</feature>
<feature type="transmembrane region" description="Helical" evidence="1">
    <location>
        <begin position="133"/>
        <end position="155"/>
    </location>
</feature>
<comment type="subcellular location">
    <subcellularLocation>
        <location evidence="2">Cell membrane</location>
        <topology evidence="2">Multi-pass membrane protein</topology>
    </subcellularLocation>
</comment>
<evidence type="ECO:0000255" key="1"/>
<evidence type="ECO:0000305" key="2"/>
<accession>Q9CLN1</accession>
<organism>
    <name type="scientific">Pasteurella multocida (strain Pm70)</name>
    <dbReference type="NCBI Taxonomy" id="272843"/>
    <lineage>
        <taxon>Bacteria</taxon>
        <taxon>Pseudomonadati</taxon>
        <taxon>Pseudomonadota</taxon>
        <taxon>Gammaproteobacteria</taxon>
        <taxon>Pasteurellales</taxon>
        <taxon>Pasteurellaceae</taxon>
        <taxon>Pasteurella</taxon>
    </lineage>
</organism>
<protein>
    <recommendedName>
        <fullName>Uncharacterized protein PM1189</fullName>
    </recommendedName>
</protein>
<dbReference type="EMBL" id="AE004439">
    <property type="protein sequence ID" value="AAK03273.1"/>
    <property type="molecule type" value="Genomic_DNA"/>
</dbReference>
<dbReference type="RefSeq" id="WP_005723572.1">
    <property type="nucleotide sequence ID" value="NC_002663.1"/>
</dbReference>
<dbReference type="STRING" id="272843.PM1189"/>
<dbReference type="EnsemblBacteria" id="AAK03273">
    <property type="protein sequence ID" value="AAK03273"/>
    <property type="gene ID" value="PM1189"/>
</dbReference>
<dbReference type="KEGG" id="pmu:PM1189"/>
<dbReference type="HOGENOM" id="CLU_1561435_0_0_6"/>
<dbReference type="OrthoDB" id="9982019at2"/>
<dbReference type="Proteomes" id="UP000000809">
    <property type="component" value="Chromosome"/>
</dbReference>
<dbReference type="GO" id="GO:0005886">
    <property type="term" value="C:plasma membrane"/>
    <property type="evidence" value="ECO:0007669"/>
    <property type="project" value="UniProtKB-SubCell"/>
</dbReference>
<gene>
    <name type="ordered locus">PM1189</name>
</gene>
<keyword id="KW-1003">Cell membrane</keyword>
<keyword id="KW-0472">Membrane</keyword>
<keyword id="KW-1185">Reference proteome</keyword>
<keyword id="KW-0812">Transmembrane</keyword>
<keyword id="KW-1133">Transmembrane helix</keyword>
<reference key="1">
    <citation type="journal article" date="2001" name="Proc. Natl. Acad. Sci. U.S.A.">
        <title>Complete genomic sequence of Pasteurella multocida Pm70.</title>
        <authorList>
            <person name="May B.J."/>
            <person name="Zhang Q."/>
            <person name="Li L.L."/>
            <person name="Paustian M.L."/>
            <person name="Whittam T.S."/>
            <person name="Kapur V."/>
        </authorList>
    </citation>
    <scope>NUCLEOTIDE SEQUENCE [LARGE SCALE GENOMIC DNA]</scope>
    <source>
        <strain>Pm70</strain>
    </source>
</reference>
<sequence length="156" mass="17151">MTEKRLAQISVVLSTIIIMTYAFLSSYFLNKPLNLSSADLMYFALSNLLSLSLPFVCAWFPYLFVRPAAVTGSALSAFGLFLFFAITSSTMDDPKGAAAIWVIYFFWLIGAALAGVYPALFKPHFFTKTATRALVLSALFTVVVSFIIGFLISRIA</sequence>
<proteinExistence type="predicted"/>
<name>Y1189_PASMU</name>